<organism>
    <name type="scientific">Rattus norvegicus</name>
    <name type="common">Rat</name>
    <dbReference type="NCBI Taxonomy" id="10116"/>
    <lineage>
        <taxon>Eukaryota</taxon>
        <taxon>Metazoa</taxon>
        <taxon>Chordata</taxon>
        <taxon>Craniata</taxon>
        <taxon>Vertebrata</taxon>
        <taxon>Euteleostomi</taxon>
        <taxon>Mammalia</taxon>
        <taxon>Eutheria</taxon>
        <taxon>Euarchontoglires</taxon>
        <taxon>Glires</taxon>
        <taxon>Rodentia</taxon>
        <taxon>Myomorpha</taxon>
        <taxon>Muroidea</taxon>
        <taxon>Muridae</taxon>
        <taxon>Murinae</taxon>
        <taxon>Rattus</taxon>
    </lineage>
</organism>
<protein>
    <recommendedName>
        <fullName>Calbindin</fullName>
    </recommendedName>
    <alternativeName>
        <fullName>Calbindin D28</fullName>
    </alternativeName>
    <alternativeName>
        <fullName>D-28K</fullName>
    </alternativeName>
    <alternativeName>
        <fullName>Spot 35 protein</fullName>
    </alternativeName>
    <alternativeName>
        <fullName>Vitamin D-dependent calcium-binding protein, avian-type</fullName>
    </alternativeName>
</protein>
<reference key="1">
    <citation type="journal article" date="1986" name="Nucleic Acids Res.">
        <title>Nucleotide sequence of cDNA to mRNA for a cerebellar Ca-binding protein, spot 35 protein.</title>
        <authorList>
            <person name="Yamakuni T."/>
            <person name="Kuwano R."/>
            <person name="Odani S."/>
            <person name="Miki N."/>
            <person name="Yamaguchi Y."/>
            <person name="Takahashi Y."/>
        </authorList>
    </citation>
    <scope>NUCLEOTIDE SEQUENCE [MRNA]</scope>
    <source>
        <tissue>Brain</tissue>
    </source>
</reference>
<reference key="2">
    <citation type="journal article" date="1988" name="Mol. Endocrinol.">
        <title>Rat brain calbindin D28: six domain structure and extensive amino acid homology with chicken calbindin D28.</title>
        <authorList>
            <person name="Hunziker W."/>
            <person name="Schrickel S."/>
        </authorList>
    </citation>
    <scope>NUCLEOTIDE SEQUENCE</scope>
</reference>
<reference key="3">
    <citation type="journal article" date="1988" name="J. Biol. Chem.">
        <title>Expression in Escherichia coli of full-length and mutant rat brain calbindin D28. Comparison with the purified native protein.</title>
        <authorList>
            <person name="Gross M.D."/>
            <person name="Kumar R."/>
            <person name="Hunziker W."/>
        </authorList>
    </citation>
    <scope>NUCLEOTIDE SEQUENCE</scope>
    <source>
        <tissue>Brain</tissue>
    </source>
</reference>
<reference key="4">
    <citation type="journal article" date="1987" name="J. Neurochem.">
        <title>Molecular cloning of cDNA to mRNA for a cerebellar spot 35 protein.</title>
        <authorList>
            <person name="Yamakuni T."/>
            <person name="Kuwano R."/>
            <person name="Odani S."/>
            <person name="Miki N."/>
            <person name="Yamaguchi K."/>
            <person name="Takahashi Y."/>
        </authorList>
    </citation>
    <scope>NUCLEOTIDE SEQUENCE</scope>
    <source>
        <tissue>Cerebellum</tissue>
    </source>
</reference>
<reference key="5">
    <citation type="journal article" date="1989" name="Gene">
        <title>Cloning and analysis of calbindin-D28K cDNA and its expression in the central nervous system.</title>
        <authorList>
            <person name="Lomri N.E."/>
            <person name="Perret C."/>
            <person name="Gouhier N."/>
            <person name="Thomasset M."/>
        </authorList>
    </citation>
    <scope>NUCLEOTIDE SEQUENCE [GENOMIC DNA]</scope>
    <source>
        <tissue>Brain</tissue>
    </source>
</reference>
<reference key="6">
    <citation type="journal article" date="2004" name="Genome Res.">
        <title>The status, quality, and expansion of the NIH full-length cDNA project: the Mammalian Gene Collection (MGC).</title>
        <authorList>
            <consortium name="The MGC Project Team"/>
        </authorList>
    </citation>
    <scope>NUCLEOTIDE SEQUENCE [LARGE SCALE MRNA]</scope>
    <source>
        <tissue>Kidney</tissue>
    </source>
</reference>
<reference key="7">
    <citation type="submission" date="2007-04" db="UniProtKB">
        <authorList>
            <person name="Lubec G."/>
            <person name="Diao W."/>
        </authorList>
    </citation>
    <scope>PROTEIN SEQUENCE OF 73-93; 143-152; 222-235 AND 237-246</scope>
    <scope>IDENTIFICATION BY MASS SPECTROMETRY</scope>
    <source>
        <strain>Sprague-Dawley</strain>
        <tissue>Hippocampus</tissue>
    </source>
</reference>
<reference key="8">
    <citation type="journal article" date="1991" name="Biochemistry">
        <title>Brain calbindin-D28k and an Mr 29,000 calcium binding protein in cerebellum are different but related proteins: evidence obtained from sequence analysis by tandem mass spectrometry.</title>
        <authorList>
            <person name="Gabrielides C."/>
            <person name="McCormack A.L."/>
            <person name="Hunt D.F."/>
            <person name="Christakos S."/>
        </authorList>
    </citation>
    <scope>PARTIAL PROTEIN SEQUENCE</scope>
    <scope>ACETYLATION AT ALA-2</scope>
    <scope>IDENTIFICATION BY MASS SPECTROMETRY</scope>
</reference>
<reference key="9">
    <citation type="journal article" date="2006" name="Nat. Struct. Mol. Biol.">
        <title>Structure, binding interface and hydrophobic transitions of Ca2+-loaded calbindin-D(28K).</title>
        <authorList>
            <person name="Kojetin D.J."/>
            <person name="Venters R.A."/>
            <person name="Kordys D.R."/>
            <person name="Thompson R.J."/>
            <person name="Kumar R."/>
            <person name="Cavanagh J."/>
        </authorList>
    </citation>
    <scope>STRUCTURE BY NMR IN COMPLEX WITH CALCIUM IONS</scope>
</reference>
<accession>P07171</accession>
<proteinExistence type="evidence at protein level"/>
<name>CALB1_RAT</name>
<keyword id="KW-0002">3D-structure</keyword>
<keyword id="KW-0007">Acetylation</keyword>
<keyword id="KW-0106">Calcium</keyword>
<keyword id="KW-0903">Direct protein sequencing</keyword>
<keyword id="KW-0479">Metal-binding</keyword>
<keyword id="KW-1185">Reference proteome</keyword>
<keyword id="KW-0677">Repeat</keyword>
<keyword id="KW-0848">Vitamin D</keyword>
<evidence type="ECO:0000250" key="1">
    <source>
        <dbReference type="UniProtKB" id="P05937"/>
    </source>
</evidence>
<evidence type="ECO:0000255" key="2">
    <source>
        <dbReference type="PROSITE-ProRule" id="PRU00448"/>
    </source>
</evidence>
<evidence type="ECO:0000269" key="3">
    <source>
    </source>
</evidence>
<evidence type="ECO:0000305" key="4"/>
<evidence type="ECO:0007829" key="5">
    <source>
        <dbReference type="PDB" id="2F33"/>
    </source>
</evidence>
<gene>
    <name type="primary">Calb1</name>
</gene>
<sequence>MAESHLQSSLITASQFFEIWLHFDADGSGYLEGKELQNLIQELLQARKKAGLELSPEMKTFVDQYGQRDDGKIGIVELAHVLPTEENFLLLFRCQQLKSCEEFMKTWRKYDTDHSGFIETEELKNFLKDLLEKANKTVDDTKLAEYTDLMLKLFDSNNDGKLELTEMARLLPVQENFLLKFQGIKMCGKEFNKAFELYDQDGNGYIDENELDALLKDLCEKNKQELDINNISTYKKNIMALSDGGKLYRTDLALILSAGDN</sequence>
<feature type="initiator methionine" description="Removed" evidence="3">
    <location>
        <position position="1"/>
    </location>
</feature>
<feature type="chain" id="PRO_0000073475" description="Calbindin">
    <location>
        <begin position="2"/>
        <end position="261"/>
    </location>
</feature>
<feature type="domain" description="EF-hand 1" evidence="2">
    <location>
        <begin position="11"/>
        <end position="46"/>
    </location>
</feature>
<feature type="domain" description="EF-hand 2" evidence="2">
    <location>
        <begin position="53"/>
        <end position="88"/>
    </location>
</feature>
<feature type="domain" description="EF-hand 3" evidence="2">
    <location>
        <begin position="98"/>
        <end position="133"/>
    </location>
</feature>
<feature type="domain" description="EF-hand 4" evidence="2">
    <location>
        <begin position="142"/>
        <end position="177"/>
    </location>
</feature>
<feature type="domain" description="EF-hand 5" evidence="2">
    <location>
        <begin position="186"/>
        <end position="221"/>
    </location>
</feature>
<feature type="region of interest" description="Interaction with RANBP9" evidence="1">
    <location>
        <begin position="2"/>
        <end position="7"/>
    </location>
</feature>
<feature type="binding site" evidence="2">
    <location>
        <position position="24"/>
    </location>
    <ligand>
        <name>Ca(2+)</name>
        <dbReference type="ChEBI" id="CHEBI:29108"/>
        <label>1</label>
    </ligand>
</feature>
<feature type="binding site" evidence="2">
    <location>
        <position position="26"/>
    </location>
    <ligand>
        <name>Ca(2+)</name>
        <dbReference type="ChEBI" id="CHEBI:29108"/>
        <label>1</label>
    </ligand>
</feature>
<feature type="binding site" evidence="2">
    <location>
        <position position="28"/>
    </location>
    <ligand>
        <name>Ca(2+)</name>
        <dbReference type="ChEBI" id="CHEBI:29108"/>
        <label>1</label>
    </ligand>
</feature>
<feature type="binding site" evidence="2">
    <location>
        <position position="30"/>
    </location>
    <ligand>
        <name>Ca(2+)</name>
        <dbReference type="ChEBI" id="CHEBI:29108"/>
        <label>1</label>
    </ligand>
</feature>
<feature type="binding site" evidence="2">
    <location>
        <position position="35"/>
    </location>
    <ligand>
        <name>Ca(2+)</name>
        <dbReference type="ChEBI" id="CHEBI:29108"/>
        <label>1</label>
    </ligand>
</feature>
<feature type="binding site" evidence="2">
    <location>
        <position position="111"/>
    </location>
    <ligand>
        <name>Ca(2+)</name>
        <dbReference type="ChEBI" id="CHEBI:29108"/>
        <label>2</label>
    </ligand>
</feature>
<feature type="binding site" evidence="2">
    <location>
        <position position="113"/>
    </location>
    <ligand>
        <name>Ca(2+)</name>
        <dbReference type="ChEBI" id="CHEBI:29108"/>
        <label>2</label>
    </ligand>
</feature>
<feature type="binding site" evidence="2">
    <location>
        <position position="115"/>
    </location>
    <ligand>
        <name>Ca(2+)</name>
        <dbReference type="ChEBI" id="CHEBI:29108"/>
        <label>2</label>
    </ligand>
</feature>
<feature type="binding site" evidence="2">
    <location>
        <position position="122"/>
    </location>
    <ligand>
        <name>Ca(2+)</name>
        <dbReference type="ChEBI" id="CHEBI:29108"/>
        <label>2</label>
    </ligand>
</feature>
<feature type="binding site" evidence="2">
    <location>
        <position position="155"/>
    </location>
    <ligand>
        <name>Ca(2+)</name>
        <dbReference type="ChEBI" id="CHEBI:29108"/>
        <label>3</label>
    </ligand>
</feature>
<feature type="binding site" evidence="2">
    <location>
        <position position="157"/>
    </location>
    <ligand>
        <name>Ca(2+)</name>
        <dbReference type="ChEBI" id="CHEBI:29108"/>
        <label>3</label>
    </ligand>
</feature>
<feature type="binding site" evidence="2">
    <location>
        <position position="159"/>
    </location>
    <ligand>
        <name>Ca(2+)</name>
        <dbReference type="ChEBI" id="CHEBI:29108"/>
        <label>3</label>
    </ligand>
</feature>
<feature type="binding site" evidence="2">
    <location>
        <position position="161"/>
    </location>
    <ligand>
        <name>Ca(2+)</name>
        <dbReference type="ChEBI" id="CHEBI:29108"/>
        <label>3</label>
    </ligand>
</feature>
<feature type="binding site" evidence="2">
    <location>
        <position position="166"/>
    </location>
    <ligand>
        <name>Ca(2+)</name>
        <dbReference type="ChEBI" id="CHEBI:29108"/>
        <label>3</label>
    </ligand>
</feature>
<feature type="binding site" evidence="2">
    <location>
        <position position="199"/>
    </location>
    <ligand>
        <name>Ca(2+)</name>
        <dbReference type="ChEBI" id="CHEBI:29108"/>
        <label>4</label>
    </ligand>
</feature>
<feature type="binding site" evidence="2">
    <location>
        <position position="201"/>
    </location>
    <ligand>
        <name>Ca(2+)</name>
        <dbReference type="ChEBI" id="CHEBI:29108"/>
        <label>4</label>
    </ligand>
</feature>
<feature type="binding site" evidence="2">
    <location>
        <position position="203"/>
    </location>
    <ligand>
        <name>Ca(2+)</name>
        <dbReference type="ChEBI" id="CHEBI:29108"/>
        <label>4</label>
    </ligand>
</feature>
<feature type="binding site" evidence="2">
    <location>
        <position position="205"/>
    </location>
    <ligand>
        <name>Ca(2+)</name>
        <dbReference type="ChEBI" id="CHEBI:29108"/>
        <label>4</label>
    </ligand>
</feature>
<feature type="binding site" evidence="2">
    <location>
        <position position="210"/>
    </location>
    <ligand>
        <name>Ca(2+)</name>
        <dbReference type="ChEBI" id="CHEBI:29108"/>
        <label>4</label>
    </ligand>
</feature>
<feature type="modified residue" description="N-acetylalanine" evidence="3">
    <location>
        <position position="2"/>
    </location>
</feature>
<feature type="sequence conflict" description="In Ref. 5; AAA40852." evidence="4" ref="5">
    <original>D</original>
    <variation>H</variation>
    <location>
        <position position="139"/>
    </location>
</feature>
<feature type="helix" evidence="5">
    <location>
        <begin position="2"/>
        <end position="5"/>
    </location>
</feature>
<feature type="turn" evidence="5">
    <location>
        <begin position="6"/>
        <end position="8"/>
    </location>
</feature>
<feature type="helix" evidence="5">
    <location>
        <begin position="13"/>
        <end position="23"/>
    </location>
</feature>
<feature type="strand" evidence="5">
    <location>
        <begin position="28"/>
        <end position="31"/>
    </location>
</feature>
<feature type="helix" evidence="5">
    <location>
        <begin position="34"/>
        <end position="50"/>
    </location>
</feature>
<feature type="helix" evidence="5">
    <location>
        <begin position="56"/>
        <end position="65"/>
    </location>
</feature>
<feature type="helix" evidence="5">
    <location>
        <begin position="68"/>
        <end position="70"/>
    </location>
</feature>
<feature type="helix" evidence="5">
    <location>
        <begin position="75"/>
        <end position="81"/>
    </location>
</feature>
<feature type="helix" evidence="5">
    <location>
        <begin position="88"/>
        <end position="92"/>
    </location>
</feature>
<feature type="helix" evidence="5">
    <location>
        <begin position="93"/>
        <end position="95"/>
    </location>
</feature>
<feature type="helix" evidence="5">
    <location>
        <begin position="100"/>
        <end position="107"/>
    </location>
</feature>
<feature type="turn" evidence="5">
    <location>
        <begin position="112"/>
        <end position="114"/>
    </location>
</feature>
<feature type="strand" evidence="5">
    <location>
        <begin position="116"/>
        <end position="118"/>
    </location>
</feature>
<feature type="helix" evidence="5">
    <location>
        <begin position="120"/>
        <end position="134"/>
    </location>
</feature>
<feature type="helix" evidence="5">
    <location>
        <begin position="140"/>
        <end position="153"/>
    </location>
</feature>
<feature type="strand" evidence="5">
    <location>
        <begin position="156"/>
        <end position="160"/>
    </location>
</feature>
<feature type="helix" evidence="5">
    <location>
        <begin position="164"/>
        <end position="170"/>
    </location>
</feature>
<feature type="turn" evidence="5">
    <location>
        <begin position="173"/>
        <end position="175"/>
    </location>
</feature>
<feature type="helix" evidence="5">
    <location>
        <begin position="178"/>
        <end position="183"/>
    </location>
</feature>
<feature type="helix" evidence="5">
    <location>
        <begin position="188"/>
        <end position="198"/>
    </location>
</feature>
<feature type="strand" evidence="5">
    <location>
        <begin position="201"/>
        <end position="204"/>
    </location>
</feature>
<feature type="helix" evidence="5">
    <location>
        <begin position="208"/>
        <end position="221"/>
    </location>
</feature>
<feature type="turn" evidence="5">
    <location>
        <begin position="223"/>
        <end position="225"/>
    </location>
</feature>
<feature type="turn" evidence="5">
    <location>
        <begin position="228"/>
        <end position="230"/>
    </location>
</feature>
<feature type="helix" evidence="5">
    <location>
        <begin position="231"/>
        <end position="239"/>
    </location>
</feature>
<feature type="helix" evidence="5">
    <location>
        <begin position="249"/>
        <end position="251"/>
    </location>
</feature>
<feature type="helix" evidence="5">
    <location>
        <begin position="253"/>
        <end position="256"/>
    </location>
</feature>
<dbReference type="EMBL" id="M31178">
    <property type="protein sequence ID" value="AAA40851.1"/>
    <property type="molecule type" value="mRNA"/>
</dbReference>
<dbReference type="EMBL" id="X04280">
    <property type="protein sequence ID" value="CAA27828.1"/>
    <property type="molecule type" value="mRNA"/>
</dbReference>
<dbReference type="EMBL" id="M27839">
    <property type="protein sequence ID" value="AAA40852.1"/>
    <property type="molecule type" value="Genomic_DNA"/>
</dbReference>
<dbReference type="EMBL" id="BC081764">
    <property type="protein sequence ID" value="AAH81764.1"/>
    <property type="molecule type" value="mRNA"/>
</dbReference>
<dbReference type="PIR" id="A30808">
    <property type="entry name" value="KLRTB"/>
</dbReference>
<dbReference type="RefSeq" id="NP_114190.1">
    <property type="nucleotide sequence ID" value="NM_031984.2"/>
</dbReference>
<dbReference type="PDB" id="2F33">
    <property type="method" value="NMR"/>
    <property type="chains" value="A=1-261"/>
</dbReference>
<dbReference type="PDB" id="2G9B">
    <property type="method" value="NMR"/>
    <property type="chains" value="A=1-261"/>
</dbReference>
<dbReference type="PDBsum" id="2F33"/>
<dbReference type="PDBsum" id="2G9B"/>
<dbReference type="SMR" id="P07171"/>
<dbReference type="BioGRID" id="249865">
    <property type="interactions" value="1"/>
</dbReference>
<dbReference type="FunCoup" id="P07171">
    <property type="interactions" value="1022"/>
</dbReference>
<dbReference type="IntAct" id="P07171">
    <property type="interactions" value="1"/>
</dbReference>
<dbReference type="MINT" id="P07171"/>
<dbReference type="STRING" id="10116.ENSRNOP00000010845"/>
<dbReference type="iPTMnet" id="P07171"/>
<dbReference type="PhosphoSitePlus" id="P07171"/>
<dbReference type="PaxDb" id="10116-ENSRNOP00000010845"/>
<dbReference type="ABCD" id="P07171">
    <property type="antibodies" value="2 sequenced antibodies"/>
</dbReference>
<dbReference type="Ensembl" id="ENSRNOT00000010845.5">
    <property type="protein sequence ID" value="ENSRNOP00000010845.3"/>
    <property type="gene ID" value="ENSRNOG00000007456.5"/>
</dbReference>
<dbReference type="GeneID" id="83839"/>
<dbReference type="KEGG" id="rno:83839"/>
<dbReference type="UCSC" id="RGD:69340">
    <property type="organism name" value="rat"/>
</dbReference>
<dbReference type="AGR" id="RGD:69340"/>
<dbReference type="CTD" id="793"/>
<dbReference type="RGD" id="69340">
    <property type="gene designation" value="Calb1"/>
</dbReference>
<dbReference type="eggNOG" id="KOG0027">
    <property type="taxonomic scope" value="Eukaryota"/>
</dbReference>
<dbReference type="GeneTree" id="ENSGT00950000183108"/>
<dbReference type="HOGENOM" id="CLU_054826_1_1_1"/>
<dbReference type="InParanoid" id="P07171"/>
<dbReference type="OrthoDB" id="428774at2759"/>
<dbReference type="PhylomeDB" id="P07171"/>
<dbReference type="TreeFam" id="TF325083"/>
<dbReference type="EvolutionaryTrace" id="P07171"/>
<dbReference type="PRO" id="PR:P07171"/>
<dbReference type="Proteomes" id="UP000002494">
    <property type="component" value="Chromosome 5"/>
</dbReference>
<dbReference type="Bgee" id="ENSRNOG00000007456">
    <property type="expression patterns" value="Expressed in kidney and 16 other cell types or tissues"/>
</dbReference>
<dbReference type="GO" id="GO:0030424">
    <property type="term" value="C:axon"/>
    <property type="evidence" value="ECO:0000314"/>
    <property type="project" value="BHF-UCL"/>
</dbReference>
<dbReference type="GO" id="GO:0044305">
    <property type="term" value="C:calyx of Held"/>
    <property type="evidence" value="ECO:0000314"/>
    <property type="project" value="SynGO"/>
</dbReference>
<dbReference type="GO" id="GO:0032437">
    <property type="term" value="C:cuticular plate"/>
    <property type="evidence" value="ECO:0000314"/>
    <property type="project" value="RGD"/>
</dbReference>
<dbReference type="GO" id="GO:0005737">
    <property type="term" value="C:cytoplasm"/>
    <property type="evidence" value="ECO:0000266"/>
    <property type="project" value="RGD"/>
</dbReference>
<dbReference type="GO" id="GO:0005829">
    <property type="term" value="C:cytosol"/>
    <property type="evidence" value="ECO:0000266"/>
    <property type="project" value="RGD"/>
</dbReference>
<dbReference type="GO" id="GO:0030425">
    <property type="term" value="C:dendrite"/>
    <property type="evidence" value="ECO:0000266"/>
    <property type="project" value="RGD"/>
</dbReference>
<dbReference type="GO" id="GO:0098982">
    <property type="term" value="C:GABA-ergic synapse"/>
    <property type="evidence" value="ECO:0000266"/>
    <property type="project" value="RGD"/>
</dbReference>
<dbReference type="GO" id="GO:0098978">
    <property type="term" value="C:glutamatergic synapse"/>
    <property type="evidence" value="ECO:0000266"/>
    <property type="project" value="RGD"/>
</dbReference>
<dbReference type="GO" id="GO:0098686">
    <property type="term" value="C:hippocampal mossy fiber to CA3 synapse"/>
    <property type="evidence" value="ECO:0000266"/>
    <property type="project" value="RGD"/>
</dbReference>
<dbReference type="GO" id="GO:0043005">
    <property type="term" value="C:neuron projection"/>
    <property type="evidence" value="ECO:0000266"/>
    <property type="project" value="RGD"/>
</dbReference>
<dbReference type="GO" id="GO:0043025">
    <property type="term" value="C:neuronal cell body"/>
    <property type="evidence" value="ECO:0000266"/>
    <property type="project" value="RGD"/>
</dbReference>
<dbReference type="GO" id="GO:0005634">
    <property type="term" value="C:nucleus"/>
    <property type="evidence" value="ECO:0000266"/>
    <property type="project" value="RGD"/>
</dbReference>
<dbReference type="GO" id="GO:0098794">
    <property type="term" value="C:postsynapse"/>
    <property type="evidence" value="ECO:0000314"/>
    <property type="project" value="SynGO"/>
</dbReference>
<dbReference type="GO" id="GO:0099524">
    <property type="term" value="C:postsynaptic cytosol"/>
    <property type="evidence" value="ECO:0000314"/>
    <property type="project" value="SynGO"/>
</dbReference>
<dbReference type="GO" id="GO:0099523">
    <property type="term" value="C:presynaptic cytosol"/>
    <property type="evidence" value="ECO:0000314"/>
    <property type="project" value="SynGO"/>
</dbReference>
<dbReference type="GO" id="GO:0032420">
    <property type="term" value="C:stereocilium"/>
    <property type="evidence" value="ECO:0000314"/>
    <property type="project" value="RGD"/>
</dbReference>
<dbReference type="GO" id="GO:0045202">
    <property type="term" value="C:synapse"/>
    <property type="evidence" value="ECO:0000266"/>
    <property type="project" value="RGD"/>
</dbReference>
<dbReference type="GO" id="GO:0043195">
    <property type="term" value="C:terminal bouton"/>
    <property type="evidence" value="ECO:0007005"/>
    <property type="project" value="ParkinsonsUK-UCL"/>
</dbReference>
<dbReference type="GO" id="GO:0005509">
    <property type="term" value="F:calcium ion binding"/>
    <property type="evidence" value="ECO:0000314"/>
    <property type="project" value="RGD"/>
</dbReference>
<dbReference type="GO" id="GO:0099567">
    <property type="term" value="F:calcium ion binding involved in regulation of postsynaptic cytosolic calcium ion concentration"/>
    <property type="evidence" value="ECO:0000266"/>
    <property type="project" value="RGD"/>
</dbReference>
<dbReference type="GO" id="GO:0099534">
    <property type="term" value="F:calcium ion binding involved in regulation of presynaptic cytosolic calcium ion concentration"/>
    <property type="evidence" value="ECO:0000266"/>
    <property type="project" value="RGD"/>
</dbReference>
<dbReference type="GO" id="GO:0005499">
    <property type="term" value="F:vitamin D binding"/>
    <property type="evidence" value="ECO:0007669"/>
    <property type="project" value="UniProtKB-KW"/>
</dbReference>
<dbReference type="GO" id="GO:0008270">
    <property type="term" value="F:zinc ion binding"/>
    <property type="evidence" value="ECO:0000266"/>
    <property type="project" value="RGD"/>
</dbReference>
<dbReference type="GO" id="GO:0090102">
    <property type="term" value="P:cochlea development"/>
    <property type="evidence" value="ECO:0000270"/>
    <property type="project" value="RGD"/>
</dbReference>
<dbReference type="GO" id="GO:0007611">
    <property type="term" value="P:learning or memory"/>
    <property type="evidence" value="ECO:0000270"/>
    <property type="project" value="RGD"/>
</dbReference>
<dbReference type="GO" id="GO:0007626">
    <property type="term" value="P:locomotory behavior"/>
    <property type="evidence" value="ECO:0000266"/>
    <property type="project" value="RGD"/>
</dbReference>
<dbReference type="GO" id="GO:0007616">
    <property type="term" value="P:long-term memory"/>
    <property type="evidence" value="ECO:0000266"/>
    <property type="project" value="RGD"/>
</dbReference>
<dbReference type="GO" id="GO:0072205">
    <property type="term" value="P:metanephric collecting duct development"/>
    <property type="evidence" value="ECO:0000266"/>
    <property type="project" value="RGD"/>
</dbReference>
<dbReference type="GO" id="GO:0072286">
    <property type="term" value="P:metanephric connecting tubule development"/>
    <property type="evidence" value="ECO:0000266"/>
    <property type="project" value="RGD"/>
</dbReference>
<dbReference type="GO" id="GO:0072221">
    <property type="term" value="P:metanephric distal convoluted tubule development"/>
    <property type="evidence" value="ECO:0000266"/>
    <property type="project" value="RGD"/>
</dbReference>
<dbReference type="GO" id="GO:0035502">
    <property type="term" value="P:metanephric part of ureteric bud development"/>
    <property type="evidence" value="ECO:0000266"/>
    <property type="project" value="RGD"/>
</dbReference>
<dbReference type="GO" id="GO:0048167">
    <property type="term" value="P:regulation of synaptic plasticity"/>
    <property type="evidence" value="ECO:0000315"/>
    <property type="project" value="RGD"/>
</dbReference>
<dbReference type="GO" id="GO:0010996">
    <property type="term" value="P:response to auditory stimulus"/>
    <property type="evidence" value="ECO:0000270"/>
    <property type="project" value="RGD"/>
</dbReference>
<dbReference type="GO" id="GO:0060041">
    <property type="term" value="P:retina development in camera-type eye"/>
    <property type="evidence" value="ECO:0000266"/>
    <property type="project" value="RGD"/>
</dbReference>
<dbReference type="GO" id="GO:0010842">
    <property type="term" value="P:retina layer formation"/>
    <property type="evidence" value="ECO:0000266"/>
    <property type="project" value="RGD"/>
</dbReference>
<dbReference type="GO" id="GO:0007614">
    <property type="term" value="P:short-term memory"/>
    <property type="evidence" value="ECO:0000266"/>
    <property type="project" value="RGD"/>
</dbReference>
<dbReference type="GO" id="GO:0042359">
    <property type="term" value="P:vitamin D metabolic process"/>
    <property type="evidence" value="ECO:0000304"/>
    <property type="project" value="RGD"/>
</dbReference>
<dbReference type="CDD" id="cd16176">
    <property type="entry name" value="EFh_HEF_CB"/>
    <property type="match status" value="1"/>
</dbReference>
<dbReference type="FunFam" id="1.10.238.10:FF:000108">
    <property type="entry name" value="Calbindin 1"/>
    <property type="match status" value="1"/>
</dbReference>
<dbReference type="FunFam" id="1.10.238.10:FF:000147">
    <property type="entry name" value="Calbindin 1"/>
    <property type="match status" value="1"/>
</dbReference>
<dbReference type="FunFam" id="1.10.238.10:FF:000054">
    <property type="entry name" value="Calbindin 2"/>
    <property type="match status" value="1"/>
</dbReference>
<dbReference type="Gene3D" id="1.10.238.10">
    <property type="entry name" value="EF-hand"/>
    <property type="match status" value="3"/>
</dbReference>
<dbReference type="InterPro" id="IPR051001">
    <property type="entry name" value="Calbindin_Ca-bind"/>
</dbReference>
<dbReference type="InterPro" id="IPR029634">
    <property type="entry name" value="Calbindin_six-EFh_dom"/>
</dbReference>
<dbReference type="InterPro" id="IPR011992">
    <property type="entry name" value="EF-hand-dom_pair"/>
</dbReference>
<dbReference type="InterPro" id="IPR018247">
    <property type="entry name" value="EF_Hand_1_Ca_BS"/>
</dbReference>
<dbReference type="InterPro" id="IPR002048">
    <property type="entry name" value="EF_hand_dom"/>
</dbReference>
<dbReference type="PANTHER" id="PTHR19972">
    <property type="entry name" value="CALBINDIN"/>
    <property type="match status" value="1"/>
</dbReference>
<dbReference type="PANTHER" id="PTHR19972:SF14">
    <property type="entry name" value="CALBINDIN"/>
    <property type="match status" value="1"/>
</dbReference>
<dbReference type="Pfam" id="PF00036">
    <property type="entry name" value="EF-hand_1"/>
    <property type="match status" value="1"/>
</dbReference>
<dbReference type="Pfam" id="PF13499">
    <property type="entry name" value="EF-hand_7"/>
    <property type="match status" value="1"/>
</dbReference>
<dbReference type="SMART" id="SM00054">
    <property type="entry name" value="EFh"/>
    <property type="match status" value="4"/>
</dbReference>
<dbReference type="SUPFAM" id="SSF47473">
    <property type="entry name" value="EF-hand"/>
    <property type="match status" value="2"/>
</dbReference>
<dbReference type="PROSITE" id="PS00018">
    <property type="entry name" value="EF_HAND_1"/>
    <property type="match status" value="4"/>
</dbReference>
<dbReference type="PROSITE" id="PS50222">
    <property type="entry name" value="EF_HAND_2"/>
    <property type="match status" value="5"/>
</dbReference>
<comment type="function">
    <text>Buffers cytosolic calcium. May stimulate a membrane Ca(2+)-ATPase and a 3',5'-cyclic nucleotide phosphodiesterase.</text>
</comment>
<comment type="subunit">
    <text evidence="1">Interacts with RANBP9.</text>
</comment>
<comment type="domain">
    <text evidence="1">This protein has four functional calcium-binding sites; potential sites II and VI have lost affinity for calcium.</text>
</comment>
<comment type="similarity">
    <text evidence="4">Belongs to the calbindin family.</text>
</comment>